<dbReference type="EC" id="4.3.3.7" evidence="1"/>
<dbReference type="EMBL" id="CP000792">
    <property type="protein sequence ID" value="EAT97642.1"/>
    <property type="molecule type" value="Genomic_DNA"/>
</dbReference>
<dbReference type="SMR" id="A7ZDQ5"/>
<dbReference type="STRING" id="360104.CCC13826_0120"/>
<dbReference type="KEGG" id="cco:CCC13826_0120"/>
<dbReference type="eggNOG" id="COG0329">
    <property type="taxonomic scope" value="Bacteria"/>
</dbReference>
<dbReference type="HOGENOM" id="CLU_049343_7_1_7"/>
<dbReference type="UniPathway" id="UPA00034">
    <property type="reaction ID" value="UER00017"/>
</dbReference>
<dbReference type="Proteomes" id="UP000001121">
    <property type="component" value="Chromosome"/>
</dbReference>
<dbReference type="GO" id="GO:0005829">
    <property type="term" value="C:cytosol"/>
    <property type="evidence" value="ECO:0007669"/>
    <property type="project" value="TreeGrafter"/>
</dbReference>
<dbReference type="GO" id="GO:0008840">
    <property type="term" value="F:4-hydroxy-tetrahydrodipicolinate synthase activity"/>
    <property type="evidence" value="ECO:0007669"/>
    <property type="project" value="UniProtKB-UniRule"/>
</dbReference>
<dbReference type="GO" id="GO:0019877">
    <property type="term" value="P:diaminopimelate biosynthetic process"/>
    <property type="evidence" value="ECO:0007669"/>
    <property type="project" value="UniProtKB-UniRule"/>
</dbReference>
<dbReference type="GO" id="GO:0009089">
    <property type="term" value="P:lysine biosynthetic process via diaminopimelate"/>
    <property type="evidence" value="ECO:0007669"/>
    <property type="project" value="UniProtKB-UniRule"/>
</dbReference>
<dbReference type="CDD" id="cd00950">
    <property type="entry name" value="DHDPS"/>
    <property type="match status" value="1"/>
</dbReference>
<dbReference type="Gene3D" id="3.20.20.70">
    <property type="entry name" value="Aldolase class I"/>
    <property type="match status" value="1"/>
</dbReference>
<dbReference type="HAMAP" id="MF_00418">
    <property type="entry name" value="DapA"/>
    <property type="match status" value="1"/>
</dbReference>
<dbReference type="InterPro" id="IPR013785">
    <property type="entry name" value="Aldolase_TIM"/>
</dbReference>
<dbReference type="InterPro" id="IPR005263">
    <property type="entry name" value="DapA"/>
</dbReference>
<dbReference type="InterPro" id="IPR002220">
    <property type="entry name" value="DapA-like"/>
</dbReference>
<dbReference type="InterPro" id="IPR020625">
    <property type="entry name" value="Schiff_base-form_aldolases_AS"/>
</dbReference>
<dbReference type="NCBIfam" id="TIGR00674">
    <property type="entry name" value="dapA"/>
    <property type="match status" value="1"/>
</dbReference>
<dbReference type="PANTHER" id="PTHR12128:SF66">
    <property type="entry name" value="4-HYDROXY-2-OXOGLUTARATE ALDOLASE, MITOCHONDRIAL"/>
    <property type="match status" value="1"/>
</dbReference>
<dbReference type="PANTHER" id="PTHR12128">
    <property type="entry name" value="DIHYDRODIPICOLINATE SYNTHASE"/>
    <property type="match status" value="1"/>
</dbReference>
<dbReference type="Pfam" id="PF00701">
    <property type="entry name" value="DHDPS"/>
    <property type="match status" value="1"/>
</dbReference>
<dbReference type="PIRSF" id="PIRSF001365">
    <property type="entry name" value="DHDPS"/>
    <property type="match status" value="1"/>
</dbReference>
<dbReference type="PRINTS" id="PR00146">
    <property type="entry name" value="DHPICSNTHASE"/>
</dbReference>
<dbReference type="SMART" id="SM01130">
    <property type="entry name" value="DHDPS"/>
    <property type="match status" value="1"/>
</dbReference>
<dbReference type="SUPFAM" id="SSF51569">
    <property type="entry name" value="Aldolase"/>
    <property type="match status" value="1"/>
</dbReference>
<dbReference type="PROSITE" id="PS00666">
    <property type="entry name" value="DHDPS_2"/>
    <property type="match status" value="1"/>
</dbReference>
<keyword id="KW-0028">Amino-acid biosynthesis</keyword>
<keyword id="KW-0963">Cytoplasm</keyword>
<keyword id="KW-0220">Diaminopimelate biosynthesis</keyword>
<keyword id="KW-0456">Lyase</keyword>
<keyword id="KW-0457">Lysine biosynthesis</keyword>
<keyword id="KW-0704">Schiff base</keyword>
<sequence>MKNSLQGAMTALITPFKNQKLDEASFEKLIKRQIKHGIDVVVPVGTTGESATLTHDEHRICIEIAVDACKGTNVKVLAGAGSNATHEAIGIAKFAQAHGAHGILSVAPYYNKPTQEGLYEHYKAIANSIEIPVLLYNVPGRVGVDILPATVFRLFKDCKNIYGIKEATGSIDRCVDLLAHEPDLVVISGEDAINYPILSNGGKGVISVTANLLPDQISQLTHLAMNEEYKKAKLINDNLYTINKTLFCESNPIPIKAAMYLAGLIDTLEYRLPLCKPSKENFKKIEEVIKNYEIKGF</sequence>
<organism>
    <name type="scientific">Campylobacter concisus (strain 13826)</name>
    <dbReference type="NCBI Taxonomy" id="360104"/>
    <lineage>
        <taxon>Bacteria</taxon>
        <taxon>Pseudomonadati</taxon>
        <taxon>Campylobacterota</taxon>
        <taxon>Epsilonproteobacteria</taxon>
        <taxon>Campylobacterales</taxon>
        <taxon>Campylobacteraceae</taxon>
        <taxon>Campylobacter</taxon>
    </lineage>
</organism>
<protein>
    <recommendedName>
        <fullName evidence="1">4-hydroxy-tetrahydrodipicolinate synthase</fullName>
        <shortName evidence="1">HTPA synthase</shortName>
        <ecNumber evidence="1">4.3.3.7</ecNumber>
    </recommendedName>
</protein>
<reference key="1">
    <citation type="submission" date="2007-10" db="EMBL/GenBank/DDBJ databases">
        <title>Genome sequence of Campylobacter concisus 13826 isolated from human feces.</title>
        <authorList>
            <person name="Fouts D.E."/>
            <person name="Mongodin E.F."/>
            <person name="Puiu D."/>
            <person name="Sebastian Y."/>
            <person name="Miller W.G."/>
            <person name="Mandrell R.E."/>
            <person name="On S."/>
            <person name="Nelson K.E."/>
        </authorList>
    </citation>
    <scope>NUCLEOTIDE SEQUENCE [LARGE SCALE GENOMIC DNA]</scope>
    <source>
        <strain>13826</strain>
    </source>
</reference>
<evidence type="ECO:0000255" key="1">
    <source>
        <dbReference type="HAMAP-Rule" id="MF_00418"/>
    </source>
</evidence>
<evidence type="ECO:0000305" key="2"/>
<gene>
    <name evidence="1" type="primary">dapA</name>
    <name type="ordered locus">Ccon26_10550</name>
    <name type="ORF">CCC13826_0120</name>
</gene>
<proteinExistence type="inferred from homology"/>
<name>DAPA_CAMC1</name>
<accession>A7ZDQ5</accession>
<comment type="function">
    <text evidence="1">Catalyzes the condensation of (S)-aspartate-beta-semialdehyde [(S)-ASA] and pyruvate to 4-hydroxy-tetrahydrodipicolinate (HTPA).</text>
</comment>
<comment type="catalytic activity">
    <reaction evidence="1">
        <text>L-aspartate 4-semialdehyde + pyruvate = (2S,4S)-4-hydroxy-2,3,4,5-tetrahydrodipicolinate + H2O + H(+)</text>
        <dbReference type="Rhea" id="RHEA:34171"/>
        <dbReference type="ChEBI" id="CHEBI:15361"/>
        <dbReference type="ChEBI" id="CHEBI:15377"/>
        <dbReference type="ChEBI" id="CHEBI:15378"/>
        <dbReference type="ChEBI" id="CHEBI:67139"/>
        <dbReference type="ChEBI" id="CHEBI:537519"/>
        <dbReference type="EC" id="4.3.3.7"/>
    </reaction>
</comment>
<comment type="pathway">
    <text evidence="1">Amino-acid biosynthesis; L-lysine biosynthesis via DAP pathway; (S)-tetrahydrodipicolinate from L-aspartate: step 3/4.</text>
</comment>
<comment type="subunit">
    <text evidence="1">Homotetramer; dimer of dimers.</text>
</comment>
<comment type="subcellular location">
    <subcellularLocation>
        <location evidence="1">Cytoplasm</location>
    </subcellularLocation>
</comment>
<comment type="similarity">
    <text evidence="1">Belongs to the DapA family.</text>
</comment>
<comment type="caution">
    <text evidence="2">Was originally thought to be a dihydrodipicolinate synthase (DHDPS), catalyzing the condensation of (S)-aspartate-beta-semialdehyde [(S)-ASA] and pyruvate to dihydrodipicolinate (DHDP). However, it was shown in E.coli that the product of the enzymatic reaction is not dihydrodipicolinate but in fact (4S)-4-hydroxy-2,3,4,5-tetrahydro-(2S)-dipicolinic acid (HTPA), and that the consecutive dehydration reaction leading to DHDP is not spontaneous but catalyzed by DapB.</text>
</comment>
<feature type="chain" id="PRO_0000340938" description="4-hydroxy-tetrahydrodipicolinate synthase">
    <location>
        <begin position="1"/>
        <end position="297"/>
    </location>
</feature>
<feature type="active site" description="Proton donor/acceptor" evidence="1">
    <location>
        <position position="136"/>
    </location>
</feature>
<feature type="active site" description="Schiff-base intermediate with substrate" evidence="1">
    <location>
        <position position="165"/>
    </location>
</feature>
<feature type="binding site" evidence="1">
    <location>
        <position position="47"/>
    </location>
    <ligand>
        <name>pyruvate</name>
        <dbReference type="ChEBI" id="CHEBI:15361"/>
    </ligand>
</feature>
<feature type="binding site" evidence="1">
    <location>
        <position position="206"/>
    </location>
    <ligand>
        <name>pyruvate</name>
        <dbReference type="ChEBI" id="CHEBI:15361"/>
    </ligand>
</feature>
<feature type="site" description="Part of a proton relay during catalysis" evidence="1">
    <location>
        <position position="46"/>
    </location>
</feature>
<feature type="site" description="Part of a proton relay during catalysis" evidence="1">
    <location>
        <position position="110"/>
    </location>
</feature>